<gene>
    <name evidence="2" type="primary">mgrB</name>
    <name type="ordered locus">YPO1739.1</name>
</gene>
<sequence length="50" mass="5386">MLDLNITKLVTTVVIIAACCLFYLLALDSYCDQGGTFSTGICAITTIVPW</sequence>
<comment type="function">
    <text evidence="2 3 4">PhoP-regulated transcription is redox-sensitive, being activated when the periplasm becomes more reducing. MgrB acts between DsbA/DsbB and PhoP/PhoQ in this pathway (Probable). Represses PhoP/PhoQ signaling, possibly by binding to the periplasmic domain of PhoQ, altering its activity and that of downstream effector PhoP.</text>
</comment>
<comment type="subunit">
    <text evidence="4">Probably interacts with the periplasmic domain of PhoQ.</text>
</comment>
<comment type="subcellular location">
    <subcellularLocation>
        <location evidence="2">Cell inner membrane</location>
        <topology evidence="2">Single-pass membrane protein</topology>
    </subcellularLocation>
</comment>
<comment type="similarity">
    <text evidence="2">Belongs to the MgrB family.</text>
</comment>
<dbReference type="EMBL" id="AL590842">
    <property type="status" value="NOT_ANNOTATED_CDS"/>
    <property type="molecule type" value="Genomic_DNA"/>
</dbReference>
<dbReference type="Proteomes" id="UP000000815">
    <property type="component" value="Chromosome"/>
</dbReference>
<dbReference type="GO" id="GO:0005886">
    <property type="term" value="C:plasma membrane"/>
    <property type="evidence" value="ECO:0007669"/>
    <property type="project" value="UniProtKB-SubCell"/>
</dbReference>
<dbReference type="GO" id="GO:0070298">
    <property type="term" value="P:negative regulation of phosphorelay signal transduction system"/>
    <property type="evidence" value="ECO:0007669"/>
    <property type="project" value="UniProtKB-UniRule"/>
</dbReference>
<dbReference type="HAMAP" id="MF_01596">
    <property type="entry name" value="MgrB"/>
    <property type="match status" value="1"/>
</dbReference>
<dbReference type="InterPro" id="IPR020907">
    <property type="entry name" value="MgrB"/>
</dbReference>
<dbReference type="Pfam" id="PF13998">
    <property type="entry name" value="MgrB"/>
    <property type="match status" value="1"/>
</dbReference>
<proteinExistence type="inferred from homology"/>
<evidence type="ECO:0000255" key="1"/>
<evidence type="ECO:0000255" key="2">
    <source>
        <dbReference type="HAMAP-Rule" id="MF_01596"/>
    </source>
</evidence>
<evidence type="ECO:0000269" key="3">
    <source>
    </source>
</evidence>
<evidence type="ECO:0000305" key="4"/>
<reference key="1">
    <citation type="journal article" date="2001" name="Nature">
        <title>Genome sequence of Yersinia pestis, the causative agent of plague.</title>
        <authorList>
            <person name="Parkhill J."/>
            <person name="Wren B.W."/>
            <person name="Thomson N.R."/>
            <person name="Titball R.W."/>
            <person name="Holden M.T.G."/>
            <person name="Prentice M.B."/>
            <person name="Sebaihia M."/>
            <person name="James K.D."/>
            <person name="Churcher C.M."/>
            <person name="Mungall K.L."/>
            <person name="Baker S."/>
            <person name="Basham D."/>
            <person name="Bentley S.D."/>
            <person name="Brooks K."/>
            <person name="Cerdeno-Tarraga A.-M."/>
            <person name="Chillingworth T."/>
            <person name="Cronin A."/>
            <person name="Davies R.M."/>
            <person name="Davis P."/>
            <person name="Dougan G."/>
            <person name="Feltwell T."/>
            <person name="Hamlin N."/>
            <person name="Holroyd S."/>
            <person name="Jagels K."/>
            <person name="Karlyshev A.V."/>
            <person name="Leather S."/>
            <person name="Moule S."/>
            <person name="Oyston P.C.F."/>
            <person name="Quail M.A."/>
            <person name="Rutherford K.M."/>
            <person name="Simmonds M."/>
            <person name="Skelton J."/>
            <person name="Stevens K."/>
            <person name="Whitehead S."/>
            <person name="Barrell B.G."/>
        </authorList>
    </citation>
    <scope>NUCLEOTIDE SEQUENCE [LARGE SCALE GENOMIC DNA]</scope>
    <source>
        <strain>CO-92 / Biovar Orientalis</strain>
    </source>
</reference>
<reference key="2">
    <citation type="journal article" date="2009" name="PLoS Genet.">
        <title>Feedback inhibition in the PhoQ/PhoP signaling system by a membrane peptide.</title>
        <authorList>
            <person name="Lippa A.M."/>
            <person name="Goulian M."/>
        </authorList>
    </citation>
    <scope>FUNCTION</scope>
    <source>
        <strain>KIM6</strain>
    </source>
</reference>
<keyword id="KW-0997">Cell inner membrane</keyword>
<keyword id="KW-1003">Cell membrane</keyword>
<keyword id="KW-0472">Membrane</keyword>
<keyword id="KW-1185">Reference proteome</keyword>
<keyword id="KW-0678">Repressor</keyword>
<keyword id="KW-0804">Transcription</keyword>
<keyword id="KW-0805">Transcription regulation</keyword>
<keyword id="KW-0812">Transmembrane</keyword>
<keyword id="KW-1133">Transmembrane helix</keyword>
<accession>P0DM79</accession>
<feature type="chain" id="PRO_0000424532" description="PhoP/PhoQ regulator MgrB">
    <location>
        <begin position="1"/>
        <end position="50"/>
    </location>
</feature>
<feature type="topological domain" description="Cytoplasmic" evidence="1">
    <location>
        <begin position="1"/>
        <end position="4"/>
    </location>
</feature>
<feature type="transmembrane region" description="Helical" evidence="2">
    <location>
        <begin position="5"/>
        <end position="27"/>
    </location>
</feature>
<feature type="topological domain" description="Periplasmic" evidence="1">
    <location>
        <begin position="28"/>
        <end position="50"/>
    </location>
</feature>
<organism>
    <name type="scientific">Yersinia pestis</name>
    <dbReference type="NCBI Taxonomy" id="632"/>
    <lineage>
        <taxon>Bacteria</taxon>
        <taxon>Pseudomonadati</taxon>
        <taxon>Pseudomonadota</taxon>
        <taxon>Gammaproteobacteria</taxon>
        <taxon>Enterobacterales</taxon>
        <taxon>Yersiniaceae</taxon>
        <taxon>Yersinia</taxon>
    </lineage>
</organism>
<protein>
    <recommendedName>
        <fullName evidence="2">PhoP/PhoQ regulator MgrB</fullName>
    </recommendedName>
</protein>
<name>MGRB_YERPE</name>